<keyword id="KW-0408">Iron</keyword>
<keyword id="KW-0479">Metal-binding</keyword>
<keyword id="KW-1185">Reference proteome</keyword>
<proteinExistence type="inferred from homology"/>
<comment type="function">
    <text evidence="1">Involved in iron-sulfur (Fe-S) cluster assembly. May act as a regulator of Fe-S biogenesis.</text>
</comment>
<comment type="similarity">
    <text evidence="1">Belongs to the frataxin family.</text>
</comment>
<organism>
    <name type="scientific">Shigella dysenteriae serotype 1 (strain Sd197)</name>
    <dbReference type="NCBI Taxonomy" id="300267"/>
    <lineage>
        <taxon>Bacteria</taxon>
        <taxon>Pseudomonadati</taxon>
        <taxon>Pseudomonadota</taxon>
        <taxon>Gammaproteobacteria</taxon>
        <taxon>Enterobacterales</taxon>
        <taxon>Enterobacteriaceae</taxon>
        <taxon>Shigella</taxon>
    </lineage>
</organism>
<name>CYAY_SHIDS</name>
<sequence length="106" mass="12231">MNDSEFHRLADQLWLTIEERLDDWDGDSDIDCEINGGVLTITFENGSKIIINRQEPLHQVWLATKQGGYHFDLKGDEWICDRSGETFWDLLEQAATQQAGETVSFR</sequence>
<reference key="1">
    <citation type="journal article" date="2005" name="Nucleic Acids Res.">
        <title>Genome dynamics and diversity of Shigella species, the etiologic agents of bacillary dysentery.</title>
        <authorList>
            <person name="Yang F."/>
            <person name="Yang J."/>
            <person name="Zhang X."/>
            <person name="Chen L."/>
            <person name="Jiang Y."/>
            <person name="Yan Y."/>
            <person name="Tang X."/>
            <person name="Wang J."/>
            <person name="Xiong Z."/>
            <person name="Dong J."/>
            <person name="Xue Y."/>
            <person name="Zhu Y."/>
            <person name="Xu X."/>
            <person name="Sun L."/>
            <person name="Chen S."/>
            <person name="Nie H."/>
            <person name="Peng J."/>
            <person name="Xu J."/>
            <person name="Wang Y."/>
            <person name="Yuan Z."/>
            <person name="Wen Y."/>
            <person name="Yao Z."/>
            <person name="Shen Y."/>
            <person name="Qiang B."/>
            <person name="Hou Y."/>
            <person name="Yu J."/>
            <person name="Jin Q."/>
        </authorList>
    </citation>
    <scope>NUCLEOTIDE SEQUENCE [LARGE SCALE GENOMIC DNA]</scope>
    <source>
        <strain>Sd197</strain>
    </source>
</reference>
<evidence type="ECO:0000255" key="1">
    <source>
        <dbReference type="HAMAP-Rule" id="MF_00142"/>
    </source>
</evidence>
<feature type="chain" id="PRO_1000010961" description="Iron-sulfur cluster assembly protein CyaY">
    <location>
        <begin position="1"/>
        <end position="106"/>
    </location>
</feature>
<accession>Q329Y2</accession>
<gene>
    <name evidence="1" type="primary">cyaY</name>
    <name type="ordered locus">SDY_3938</name>
</gene>
<dbReference type="EMBL" id="CP000034">
    <property type="protein sequence ID" value="ABB63872.1"/>
    <property type="molecule type" value="Genomic_DNA"/>
</dbReference>
<dbReference type="RefSeq" id="WP_000999947.1">
    <property type="nucleotide sequence ID" value="NC_007606.1"/>
</dbReference>
<dbReference type="RefSeq" id="YP_405364.1">
    <property type="nucleotide sequence ID" value="NC_007606.1"/>
</dbReference>
<dbReference type="SMR" id="Q329Y2"/>
<dbReference type="STRING" id="300267.SDY_3938"/>
<dbReference type="EnsemblBacteria" id="ABB63872">
    <property type="protein sequence ID" value="ABB63872"/>
    <property type="gene ID" value="SDY_3938"/>
</dbReference>
<dbReference type="GeneID" id="93778137"/>
<dbReference type="KEGG" id="sdy:SDY_3938"/>
<dbReference type="PATRIC" id="fig|300267.13.peg.4650"/>
<dbReference type="HOGENOM" id="CLU_080880_3_0_6"/>
<dbReference type="Proteomes" id="UP000002716">
    <property type="component" value="Chromosome"/>
</dbReference>
<dbReference type="GO" id="GO:0005829">
    <property type="term" value="C:cytosol"/>
    <property type="evidence" value="ECO:0007669"/>
    <property type="project" value="TreeGrafter"/>
</dbReference>
<dbReference type="GO" id="GO:0008199">
    <property type="term" value="F:ferric iron binding"/>
    <property type="evidence" value="ECO:0007669"/>
    <property type="project" value="InterPro"/>
</dbReference>
<dbReference type="GO" id="GO:0008198">
    <property type="term" value="F:ferrous iron binding"/>
    <property type="evidence" value="ECO:0007669"/>
    <property type="project" value="TreeGrafter"/>
</dbReference>
<dbReference type="GO" id="GO:0016226">
    <property type="term" value="P:iron-sulfur cluster assembly"/>
    <property type="evidence" value="ECO:0007669"/>
    <property type="project" value="UniProtKB-UniRule"/>
</dbReference>
<dbReference type="CDD" id="cd00503">
    <property type="entry name" value="Frataxin"/>
    <property type="match status" value="1"/>
</dbReference>
<dbReference type="FunFam" id="3.30.920.10:FF:000001">
    <property type="entry name" value="Iron-sulfur cluster assembly protein CyaY"/>
    <property type="match status" value="1"/>
</dbReference>
<dbReference type="Gene3D" id="3.30.920.10">
    <property type="entry name" value="Frataxin/CyaY"/>
    <property type="match status" value="1"/>
</dbReference>
<dbReference type="HAMAP" id="MF_00142">
    <property type="entry name" value="CyaY"/>
    <property type="match status" value="1"/>
</dbReference>
<dbReference type="InterPro" id="IPR047584">
    <property type="entry name" value="CyaY"/>
</dbReference>
<dbReference type="InterPro" id="IPR002908">
    <property type="entry name" value="Frataxin/CyaY"/>
</dbReference>
<dbReference type="InterPro" id="IPR036524">
    <property type="entry name" value="Frataxin/CyaY_sf"/>
</dbReference>
<dbReference type="InterPro" id="IPR020895">
    <property type="entry name" value="Frataxin_CS"/>
</dbReference>
<dbReference type="NCBIfam" id="TIGR03421">
    <property type="entry name" value="FeS_CyaY"/>
    <property type="match status" value="1"/>
</dbReference>
<dbReference type="PANTHER" id="PTHR16821">
    <property type="entry name" value="FRATAXIN"/>
    <property type="match status" value="1"/>
</dbReference>
<dbReference type="PANTHER" id="PTHR16821:SF2">
    <property type="entry name" value="FRATAXIN, MITOCHONDRIAL"/>
    <property type="match status" value="1"/>
</dbReference>
<dbReference type="Pfam" id="PF01491">
    <property type="entry name" value="Frataxin_Cyay"/>
    <property type="match status" value="1"/>
</dbReference>
<dbReference type="SMART" id="SM01219">
    <property type="entry name" value="Frataxin_Cyay"/>
    <property type="match status" value="1"/>
</dbReference>
<dbReference type="SUPFAM" id="SSF55387">
    <property type="entry name" value="Frataxin/Nqo15-like"/>
    <property type="match status" value="1"/>
</dbReference>
<dbReference type="PROSITE" id="PS01344">
    <property type="entry name" value="FRATAXIN_1"/>
    <property type="match status" value="1"/>
</dbReference>
<dbReference type="PROSITE" id="PS50810">
    <property type="entry name" value="FRATAXIN_2"/>
    <property type="match status" value="1"/>
</dbReference>
<protein>
    <recommendedName>
        <fullName evidence="1">Iron-sulfur cluster assembly protein CyaY</fullName>
    </recommendedName>
</protein>